<reference key="1">
    <citation type="journal article" date="2011" name="J. Bacteriol.">
        <title>Genome sequence of Thermotoga sp. strain RQ2, a hyperthermophilic bacterium isolated from a geothermally heated region of the seafloor near Ribeira Quente, the Azores.</title>
        <authorList>
            <person name="Swithers K.S."/>
            <person name="DiPippo J.L."/>
            <person name="Bruce D.C."/>
            <person name="Detter C."/>
            <person name="Tapia R."/>
            <person name="Han S."/>
            <person name="Saunders E."/>
            <person name="Goodwin L.A."/>
            <person name="Han J."/>
            <person name="Woyke T."/>
            <person name="Pitluck S."/>
            <person name="Pennacchio L."/>
            <person name="Nolan M."/>
            <person name="Mikhailova N."/>
            <person name="Lykidis A."/>
            <person name="Land M.L."/>
            <person name="Brettin T."/>
            <person name="Stetter K.O."/>
            <person name="Nelson K.E."/>
            <person name="Gogarten J.P."/>
            <person name="Noll K.M."/>
        </authorList>
    </citation>
    <scope>NUCLEOTIDE SEQUENCE [LARGE SCALE GENOMIC DNA]</scope>
    <source>
        <strain>RQ2</strain>
    </source>
</reference>
<organism>
    <name type="scientific">Thermotoga sp. (strain RQ2)</name>
    <dbReference type="NCBI Taxonomy" id="126740"/>
    <lineage>
        <taxon>Bacteria</taxon>
        <taxon>Thermotogati</taxon>
        <taxon>Thermotogota</taxon>
        <taxon>Thermotogae</taxon>
        <taxon>Thermotogales</taxon>
        <taxon>Thermotogaceae</taxon>
        <taxon>Thermotoga</taxon>
    </lineage>
</organism>
<accession>B1LBN9</accession>
<keyword id="KW-0687">Ribonucleoprotein</keyword>
<keyword id="KW-0689">Ribosomal protein</keyword>
<keyword id="KW-0694">RNA-binding</keyword>
<keyword id="KW-0699">rRNA-binding</keyword>
<feature type="chain" id="PRO_1000142200" description="Large ribosomal subunit protein uL4">
    <location>
        <begin position="1"/>
        <end position="235"/>
    </location>
</feature>
<feature type="region of interest" description="Disordered" evidence="2">
    <location>
        <begin position="45"/>
        <end position="75"/>
    </location>
</feature>
<feature type="compositionally biased region" description="Basic residues" evidence="2">
    <location>
        <begin position="65"/>
        <end position="75"/>
    </location>
</feature>
<proteinExistence type="inferred from homology"/>
<evidence type="ECO:0000255" key="1">
    <source>
        <dbReference type="HAMAP-Rule" id="MF_01328"/>
    </source>
</evidence>
<evidence type="ECO:0000256" key="2">
    <source>
        <dbReference type="SAM" id="MobiDB-lite"/>
    </source>
</evidence>
<evidence type="ECO:0000305" key="3"/>
<sequence length="235" mass="26698">MAQVDLLNVKGEKVGTLEISDFVFNIDPNYDVMWRYVDMQLSNRRAGTASTKTRGEVSGGGRKPWPQKHTGRARHGSIRSPIWRHGGIAHGPKPRDWSKKLNKKMKKLALRSALSVKYRENKLFVLDDLKLERPKTKFLKEILQNLQLSDKKTLIVLPWKDEGYMNVKLSGKNLPNVKVIIADNPNNSKNGEKAVRIDGLNVFDMLKYDYLVLTQDMVSKIEEVLGNEAGKALTE</sequence>
<name>RL4_THESQ</name>
<gene>
    <name evidence="1" type="primary">rplD</name>
    <name type="ordered locus">TRQ2_1393</name>
</gene>
<dbReference type="EMBL" id="CP000969">
    <property type="protein sequence ID" value="ACB09737.1"/>
    <property type="molecule type" value="Genomic_DNA"/>
</dbReference>
<dbReference type="RefSeq" id="WP_011943785.1">
    <property type="nucleotide sequence ID" value="NC_010483.1"/>
</dbReference>
<dbReference type="SMR" id="B1LBN9"/>
<dbReference type="KEGG" id="trq:TRQ2_1393"/>
<dbReference type="HOGENOM" id="CLU_041575_5_2_0"/>
<dbReference type="Proteomes" id="UP000001687">
    <property type="component" value="Chromosome"/>
</dbReference>
<dbReference type="GO" id="GO:1990904">
    <property type="term" value="C:ribonucleoprotein complex"/>
    <property type="evidence" value="ECO:0007669"/>
    <property type="project" value="UniProtKB-KW"/>
</dbReference>
<dbReference type="GO" id="GO:0005840">
    <property type="term" value="C:ribosome"/>
    <property type="evidence" value="ECO:0007669"/>
    <property type="project" value="UniProtKB-KW"/>
</dbReference>
<dbReference type="GO" id="GO:0019843">
    <property type="term" value="F:rRNA binding"/>
    <property type="evidence" value="ECO:0007669"/>
    <property type="project" value="UniProtKB-UniRule"/>
</dbReference>
<dbReference type="GO" id="GO:0003735">
    <property type="term" value="F:structural constituent of ribosome"/>
    <property type="evidence" value="ECO:0007669"/>
    <property type="project" value="InterPro"/>
</dbReference>
<dbReference type="GO" id="GO:0006412">
    <property type="term" value="P:translation"/>
    <property type="evidence" value="ECO:0007669"/>
    <property type="project" value="UniProtKB-UniRule"/>
</dbReference>
<dbReference type="FunFam" id="3.40.1370.10:FF:000020">
    <property type="entry name" value="50S ribosomal protein L4"/>
    <property type="match status" value="1"/>
</dbReference>
<dbReference type="Gene3D" id="3.40.1370.10">
    <property type="match status" value="1"/>
</dbReference>
<dbReference type="HAMAP" id="MF_01328_B">
    <property type="entry name" value="Ribosomal_uL4_B"/>
    <property type="match status" value="1"/>
</dbReference>
<dbReference type="InterPro" id="IPR002136">
    <property type="entry name" value="Ribosomal_uL4"/>
</dbReference>
<dbReference type="InterPro" id="IPR013005">
    <property type="entry name" value="Ribosomal_uL4-like"/>
</dbReference>
<dbReference type="InterPro" id="IPR023574">
    <property type="entry name" value="Ribosomal_uL4_dom_sf"/>
</dbReference>
<dbReference type="NCBIfam" id="TIGR03953">
    <property type="entry name" value="rplD_bact"/>
    <property type="match status" value="1"/>
</dbReference>
<dbReference type="PANTHER" id="PTHR10746">
    <property type="entry name" value="50S RIBOSOMAL PROTEIN L4"/>
    <property type="match status" value="1"/>
</dbReference>
<dbReference type="PANTHER" id="PTHR10746:SF6">
    <property type="entry name" value="LARGE RIBOSOMAL SUBUNIT PROTEIN UL4M"/>
    <property type="match status" value="1"/>
</dbReference>
<dbReference type="Pfam" id="PF00573">
    <property type="entry name" value="Ribosomal_L4"/>
    <property type="match status" value="1"/>
</dbReference>
<dbReference type="SUPFAM" id="SSF52166">
    <property type="entry name" value="Ribosomal protein L4"/>
    <property type="match status" value="1"/>
</dbReference>
<comment type="function">
    <text evidence="1">One of the primary rRNA binding proteins, this protein initially binds near the 5'-end of the 23S rRNA. It is important during the early stages of 50S assembly. It makes multiple contacts with different domains of the 23S rRNA in the assembled 50S subunit and ribosome.</text>
</comment>
<comment type="function">
    <text evidence="1">Forms part of the polypeptide exit tunnel.</text>
</comment>
<comment type="subunit">
    <text evidence="1">Part of the 50S ribosomal subunit.</text>
</comment>
<comment type="similarity">
    <text evidence="1">Belongs to the universal ribosomal protein uL4 family.</text>
</comment>
<protein>
    <recommendedName>
        <fullName evidence="1">Large ribosomal subunit protein uL4</fullName>
    </recommendedName>
    <alternativeName>
        <fullName evidence="3">50S ribosomal protein L4</fullName>
    </alternativeName>
</protein>